<organism>
    <name type="scientific">Arabidopsis thaliana</name>
    <name type="common">Mouse-ear cress</name>
    <dbReference type="NCBI Taxonomy" id="3702"/>
    <lineage>
        <taxon>Eukaryota</taxon>
        <taxon>Viridiplantae</taxon>
        <taxon>Streptophyta</taxon>
        <taxon>Embryophyta</taxon>
        <taxon>Tracheophyta</taxon>
        <taxon>Spermatophyta</taxon>
        <taxon>Magnoliopsida</taxon>
        <taxon>eudicotyledons</taxon>
        <taxon>Gunneridae</taxon>
        <taxon>Pentapetalae</taxon>
        <taxon>rosids</taxon>
        <taxon>malvids</taxon>
        <taxon>Brassicales</taxon>
        <taxon>Brassicaceae</taxon>
        <taxon>Camelineae</taxon>
        <taxon>Arabidopsis</taxon>
    </lineage>
</organism>
<accession>Q9T0K5</accession>
<name>LRX3_ARATH</name>
<proteinExistence type="evidence at protein level"/>
<gene>
    <name type="primary">LRX3</name>
    <name type="ordered locus">At4g13340</name>
    <name type="ORF">T9E8.80</name>
</gene>
<evidence type="ECO:0000250" key="1"/>
<evidence type="ECO:0000250" key="2">
    <source>
        <dbReference type="UniProtKB" id="O48809"/>
    </source>
</evidence>
<evidence type="ECO:0000255" key="3"/>
<evidence type="ECO:0000256" key="4">
    <source>
        <dbReference type="SAM" id="MobiDB-lite"/>
    </source>
</evidence>
<evidence type="ECO:0000269" key="5">
    <source>
    </source>
</evidence>
<evidence type="ECO:0000269" key="6">
    <source>
    </source>
</evidence>
<dbReference type="EMBL" id="AL049608">
    <property type="protein sequence ID" value="CAB40769.1"/>
    <property type="molecule type" value="Genomic_DNA"/>
</dbReference>
<dbReference type="EMBL" id="AL161536">
    <property type="protein sequence ID" value="CAB78376.1"/>
    <property type="molecule type" value="Genomic_DNA"/>
</dbReference>
<dbReference type="EMBL" id="CP002687">
    <property type="protein sequence ID" value="AEE83265.1"/>
    <property type="molecule type" value="Genomic_DNA"/>
</dbReference>
<dbReference type="PIR" id="T06291">
    <property type="entry name" value="T06291"/>
</dbReference>
<dbReference type="RefSeq" id="NP_193070.1">
    <property type="nucleotide sequence ID" value="NM_117407.3"/>
</dbReference>
<dbReference type="BioGRID" id="12261">
    <property type="interactions" value="1"/>
</dbReference>
<dbReference type="FunCoup" id="Q9T0K5">
    <property type="interactions" value="49"/>
</dbReference>
<dbReference type="STRING" id="3702.Q9T0K5"/>
<dbReference type="GlyCosmos" id="Q9T0K5">
    <property type="glycosylation" value="5 sites, No reported glycans"/>
</dbReference>
<dbReference type="GlyGen" id="Q9T0K5">
    <property type="glycosylation" value="8 sites"/>
</dbReference>
<dbReference type="PaxDb" id="3702-AT4G13340.1"/>
<dbReference type="ProteomicsDB" id="238739"/>
<dbReference type="EnsemblPlants" id="AT4G13340.1">
    <property type="protein sequence ID" value="AT4G13340.1"/>
    <property type="gene ID" value="AT4G13340"/>
</dbReference>
<dbReference type="GeneID" id="826964"/>
<dbReference type="Gramene" id="AT4G13340.1">
    <property type="protein sequence ID" value="AT4G13340.1"/>
    <property type="gene ID" value="AT4G13340"/>
</dbReference>
<dbReference type="KEGG" id="ath:AT4G13340"/>
<dbReference type="Araport" id="AT4G13340"/>
<dbReference type="TAIR" id="AT4G13340">
    <property type="gene designation" value="LRX3"/>
</dbReference>
<dbReference type="eggNOG" id="ENOG502QQ2D">
    <property type="taxonomic scope" value="Eukaryota"/>
</dbReference>
<dbReference type="HOGENOM" id="CLU_000288_23_3_1"/>
<dbReference type="InParanoid" id="Q9T0K5"/>
<dbReference type="OMA" id="CELXARN"/>
<dbReference type="PhylomeDB" id="Q9T0K5"/>
<dbReference type="PRO" id="PR:Q9T0K5"/>
<dbReference type="Proteomes" id="UP000006548">
    <property type="component" value="Chromosome 4"/>
</dbReference>
<dbReference type="ExpressionAtlas" id="Q9T0K5">
    <property type="expression patterns" value="baseline and differential"/>
</dbReference>
<dbReference type="GO" id="GO:0005576">
    <property type="term" value="C:extracellular region"/>
    <property type="evidence" value="ECO:0007669"/>
    <property type="project" value="UniProtKB-KW"/>
</dbReference>
<dbReference type="GO" id="GO:0009505">
    <property type="term" value="C:plant-type cell wall"/>
    <property type="evidence" value="ECO:0007005"/>
    <property type="project" value="TAIR"/>
</dbReference>
<dbReference type="GO" id="GO:0009506">
    <property type="term" value="C:plasmodesma"/>
    <property type="evidence" value="ECO:0007005"/>
    <property type="project" value="TAIR"/>
</dbReference>
<dbReference type="GO" id="GO:0099503">
    <property type="term" value="C:secretory vesicle"/>
    <property type="evidence" value="ECO:0007005"/>
    <property type="project" value="TAIR"/>
</dbReference>
<dbReference type="GO" id="GO:0042277">
    <property type="term" value="F:peptide binding"/>
    <property type="evidence" value="ECO:0000353"/>
    <property type="project" value="TAIR"/>
</dbReference>
<dbReference type="GO" id="GO:0005199">
    <property type="term" value="F:structural constituent of cell wall"/>
    <property type="evidence" value="ECO:0000250"/>
    <property type="project" value="TAIR"/>
</dbReference>
<dbReference type="GO" id="GO:0071555">
    <property type="term" value="P:cell wall organization"/>
    <property type="evidence" value="ECO:0007669"/>
    <property type="project" value="UniProtKB-KW"/>
</dbReference>
<dbReference type="FunFam" id="3.80.10.10:FF:000224">
    <property type="entry name" value="Leucine-rich repeat extensin-like protein 1"/>
    <property type="match status" value="1"/>
</dbReference>
<dbReference type="FunFam" id="3.80.10.10:FF:000631">
    <property type="entry name" value="Leucine-rich repeat extensin-like protein 5"/>
    <property type="match status" value="1"/>
</dbReference>
<dbReference type="Gene3D" id="3.80.10.10">
    <property type="entry name" value="Ribonuclease Inhibitor"/>
    <property type="match status" value="2"/>
</dbReference>
<dbReference type="InterPro" id="IPR001611">
    <property type="entry name" value="Leu-rich_rpt"/>
</dbReference>
<dbReference type="InterPro" id="IPR032675">
    <property type="entry name" value="LRR_dom_sf"/>
</dbReference>
<dbReference type="InterPro" id="IPR051582">
    <property type="entry name" value="LRR_extensin-like_regulator"/>
</dbReference>
<dbReference type="InterPro" id="IPR013210">
    <property type="entry name" value="LRR_N_plant-typ"/>
</dbReference>
<dbReference type="PANTHER" id="PTHR32093">
    <property type="entry name" value="LEUCINE-RICH REPEAT EXTENSIN-LIKE PROTEIN 3-RELATED"/>
    <property type="match status" value="1"/>
</dbReference>
<dbReference type="PANTHER" id="PTHR32093:SF120">
    <property type="entry name" value="LEUCINE-RICH REPEAT EXTENSIN-LIKE PROTEIN 3-RELATED"/>
    <property type="match status" value="1"/>
</dbReference>
<dbReference type="Pfam" id="PF00560">
    <property type="entry name" value="LRR_1"/>
    <property type="match status" value="1"/>
</dbReference>
<dbReference type="Pfam" id="PF08263">
    <property type="entry name" value="LRRNT_2"/>
    <property type="match status" value="1"/>
</dbReference>
<dbReference type="PRINTS" id="PR01217">
    <property type="entry name" value="PRICHEXTENSN"/>
</dbReference>
<dbReference type="SUPFAM" id="SSF52058">
    <property type="entry name" value="L domain-like"/>
    <property type="match status" value="1"/>
</dbReference>
<protein>
    <recommendedName>
        <fullName>Leucine-rich repeat extensin-like protein 3</fullName>
        <shortName>AtLRX3</shortName>
        <shortName>LRR/EXTENSIN3</shortName>
    </recommendedName>
    <alternativeName>
        <fullName>Cell wall hydroxyproline-rich glycoprotein</fullName>
    </alternativeName>
</protein>
<sequence>MKKTIQILLFFFFLINLTNALSISSDGGVLSDNEVRHIQRRQLLEFAERSVKITVDPSLNFENPRLRNAYIALQAWKQAILSDPNNFTSNWIGSNVCNYTGVFCSPALDNRKIRTVAGIDLNHADIAGYLPEELGLLSDLALFHVNSNRFCGTVPHRFNRLKLLFELDLSNNRFAGKFPTVVLQLPSLKFLDLRFNEFEGTVPKELFSKDLDAIFINHNRFRFELPENFGDSPVSVIVLANNRFHGCVPSSLVEMKNLNEIIFMNNGLNSCLPSDIGRLKNVTVFDVSFNELVGPLPESVGEMVSVEQLNVAHNMLSGKIPASICQLPKLENFTYSYNFFTGEAPVCLRLPEFDDRRNCLPGRPAQRSPGQCKAFLSRPPVNCGSFSCGRSVSPRPPVVTPLPPPSLPSPPPPAPIFSTPPTLTSPPPPSPPPPVYSPPPPPPPPPPVYSPPPPPPPPPPPPVYSPPPPPPPPPPPPPVYSPPPPSPPPPPPPVYSPPPPPPPPPPPPVYSPPPPPVYSSPPPPPSPAPTPVYCTRPPPPPPHSPPPPQFSPPPPEPYYYSSPPPPHSSPPPHSPPPPHSPPPPIYPYLSPPPPPTPVSSPPPTPVYSPPPPPPCIEPPPPPPCIEYSPPPPPPVVHYSSPPPPPVYYSSPPPPPVYYSSPPPPPPVHYSSPPPPEVHYHSPPPSPVHYSSPPPPPSAPCEESPPPAPVVHHSPPPPMVHHSPPPPVIHQSPPPPSPEYEGPLPPVIGVSYASPPPPPFY</sequence>
<keyword id="KW-0134">Cell wall</keyword>
<keyword id="KW-0961">Cell wall biogenesis/degradation</keyword>
<keyword id="KW-0325">Glycoprotein</keyword>
<keyword id="KW-0379">Hydroxylation</keyword>
<keyword id="KW-0433">Leucine-rich repeat</keyword>
<keyword id="KW-1185">Reference proteome</keyword>
<keyword id="KW-0677">Repeat</keyword>
<keyword id="KW-0964">Secreted</keyword>
<keyword id="KW-0732">Signal</keyword>
<reference key="1">
    <citation type="journal article" date="1999" name="Nature">
        <title>Sequence and analysis of chromosome 4 of the plant Arabidopsis thaliana.</title>
        <authorList>
            <person name="Mayer K.F.X."/>
            <person name="Schueller C."/>
            <person name="Wambutt R."/>
            <person name="Murphy G."/>
            <person name="Volckaert G."/>
            <person name="Pohl T."/>
            <person name="Duesterhoeft A."/>
            <person name="Stiekema W."/>
            <person name="Entian K.-D."/>
            <person name="Terryn N."/>
            <person name="Harris B."/>
            <person name="Ansorge W."/>
            <person name="Brandt P."/>
            <person name="Grivell L.A."/>
            <person name="Rieger M."/>
            <person name="Weichselgartner M."/>
            <person name="de Simone V."/>
            <person name="Obermaier B."/>
            <person name="Mache R."/>
            <person name="Mueller M."/>
            <person name="Kreis M."/>
            <person name="Delseny M."/>
            <person name="Puigdomenech P."/>
            <person name="Watson M."/>
            <person name="Schmidtheini T."/>
            <person name="Reichert B."/>
            <person name="Portetelle D."/>
            <person name="Perez-Alonso M."/>
            <person name="Boutry M."/>
            <person name="Bancroft I."/>
            <person name="Vos P."/>
            <person name="Hoheisel J."/>
            <person name="Zimmermann W."/>
            <person name="Wedler H."/>
            <person name="Ridley P."/>
            <person name="Langham S.-A."/>
            <person name="McCullagh B."/>
            <person name="Bilham L."/>
            <person name="Robben J."/>
            <person name="van der Schueren J."/>
            <person name="Grymonprez B."/>
            <person name="Chuang Y.-J."/>
            <person name="Vandenbussche F."/>
            <person name="Braeken M."/>
            <person name="Weltjens I."/>
            <person name="Voet M."/>
            <person name="Bastiaens I."/>
            <person name="Aert R."/>
            <person name="Defoor E."/>
            <person name="Weitzenegger T."/>
            <person name="Bothe G."/>
            <person name="Ramsperger U."/>
            <person name="Hilbert H."/>
            <person name="Braun M."/>
            <person name="Holzer E."/>
            <person name="Brandt A."/>
            <person name="Peters S."/>
            <person name="van Staveren M."/>
            <person name="Dirkse W."/>
            <person name="Mooijman P."/>
            <person name="Klein Lankhorst R."/>
            <person name="Rose M."/>
            <person name="Hauf J."/>
            <person name="Koetter P."/>
            <person name="Berneiser S."/>
            <person name="Hempel S."/>
            <person name="Feldpausch M."/>
            <person name="Lamberth S."/>
            <person name="Van den Daele H."/>
            <person name="De Keyser A."/>
            <person name="Buysshaert C."/>
            <person name="Gielen J."/>
            <person name="Villarroel R."/>
            <person name="De Clercq R."/>
            <person name="van Montagu M."/>
            <person name="Rogers J."/>
            <person name="Cronin A."/>
            <person name="Quail M.A."/>
            <person name="Bray-Allen S."/>
            <person name="Clark L."/>
            <person name="Doggett J."/>
            <person name="Hall S."/>
            <person name="Kay M."/>
            <person name="Lennard N."/>
            <person name="McLay K."/>
            <person name="Mayes R."/>
            <person name="Pettett A."/>
            <person name="Rajandream M.A."/>
            <person name="Lyne M."/>
            <person name="Benes V."/>
            <person name="Rechmann S."/>
            <person name="Borkova D."/>
            <person name="Bloecker H."/>
            <person name="Scharfe M."/>
            <person name="Grimm M."/>
            <person name="Loehnert T.-H."/>
            <person name="Dose S."/>
            <person name="de Haan M."/>
            <person name="Maarse A.C."/>
            <person name="Schaefer M."/>
            <person name="Mueller-Auer S."/>
            <person name="Gabel C."/>
            <person name="Fuchs M."/>
            <person name="Fartmann B."/>
            <person name="Granderath K."/>
            <person name="Dauner D."/>
            <person name="Herzl A."/>
            <person name="Neumann S."/>
            <person name="Argiriou A."/>
            <person name="Vitale D."/>
            <person name="Liguori R."/>
            <person name="Piravandi E."/>
            <person name="Massenet O."/>
            <person name="Quigley F."/>
            <person name="Clabauld G."/>
            <person name="Muendlein A."/>
            <person name="Felber R."/>
            <person name="Schnabl S."/>
            <person name="Hiller R."/>
            <person name="Schmidt W."/>
            <person name="Lecharny A."/>
            <person name="Aubourg S."/>
            <person name="Chefdor F."/>
            <person name="Cooke R."/>
            <person name="Berger C."/>
            <person name="Monfort A."/>
            <person name="Casacuberta E."/>
            <person name="Gibbons T."/>
            <person name="Weber N."/>
            <person name="Vandenbol M."/>
            <person name="Bargues M."/>
            <person name="Terol J."/>
            <person name="Torres A."/>
            <person name="Perez-Perez A."/>
            <person name="Purnelle B."/>
            <person name="Bent E."/>
            <person name="Johnson S."/>
            <person name="Tacon D."/>
            <person name="Jesse T."/>
            <person name="Heijnen L."/>
            <person name="Schwarz S."/>
            <person name="Scholler P."/>
            <person name="Heber S."/>
            <person name="Francs P."/>
            <person name="Bielke C."/>
            <person name="Frishman D."/>
            <person name="Haase D."/>
            <person name="Lemcke K."/>
            <person name="Mewes H.-W."/>
            <person name="Stocker S."/>
            <person name="Zaccaria P."/>
            <person name="Bevan M."/>
            <person name="Wilson R.K."/>
            <person name="de la Bastide M."/>
            <person name="Habermann K."/>
            <person name="Parnell L."/>
            <person name="Dedhia N."/>
            <person name="Gnoj L."/>
            <person name="Schutz K."/>
            <person name="Huang E."/>
            <person name="Spiegel L."/>
            <person name="Sekhon M."/>
            <person name="Murray J."/>
            <person name="Sheet P."/>
            <person name="Cordes M."/>
            <person name="Abu-Threideh J."/>
            <person name="Stoneking T."/>
            <person name="Kalicki J."/>
            <person name="Graves T."/>
            <person name="Harmon G."/>
            <person name="Edwards J."/>
            <person name="Latreille P."/>
            <person name="Courtney L."/>
            <person name="Cloud J."/>
            <person name="Abbott A."/>
            <person name="Scott K."/>
            <person name="Johnson D."/>
            <person name="Minx P."/>
            <person name="Bentley D."/>
            <person name="Fulton B."/>
            <person name="Miller N."/>
            <person name="Greco T."/>
            <person name="Kemp K."/>
            <person name="Kramer J."/>
            <person name="Fulton L."/>
            <person name="Mardis E."/>
            <person name="Dante M."/>
            <person name="Pepin K."/>
            <person name="Hillier L.W."/>
            <person name="Nelson J."/>
            <person name="Spieth J."/>
            <person name="Ryan E."/>
            <person name="Andrews S."/>
            <person name="Geisel C."/>
            <person name="Layman D."/>
            <person name="Du H."/>
            <person name="Ali J."/>
            <person name="Berghoff A."/>
            <person name="Jones K."/>
            <person name="Drone K."/>
            <person name="Cotton M."/>
            <person name="Joshu C."/>
            <person name="Antonoiu B."/>
            <person name="Zidanic M."/>
            <person name="Strong C."/>
            <person name="Sun H."/>
            <person name="Lamar B."/>
            <person name="Yordan C."/>
            <person name="Ma P."/>
            <person name="Zhong J."/>
            <person name="Preston R."/>
            <person name="Vil D."/>
            <person name="Shekher M."/>
            <person name="Matero A."/>
            <person name="Shah R."/>
            <person name="Swaby I.K."/>
            <person name="O'Shaughnessy A."/>
            <person name="Rodriguez M."/>
            <person name="Hoffman J."/>
            <person name="Till S."/>
            <person name="Granat S."/>
            <person name="Shohdy N."/>
            <person name="Hasegawa A."/>
            <person name="Hameed A."/>
            <person name="Lodhi M."/>
            <person name="Johnson A."/>
            <person name="Chen E."/>
            <person name="Marra M.A."/>
            <person name="Martienssen R."/>
            <person name="McCombie W.R."/>
        </authorList>
    </citation>
    <scope>NUCLEOTIDE SEQUENCE [LARGE SCALE GENOMIC DNA]</scope>
    <source>
        <strain>cv. Columbia</strain>
    </source>
</reference>
<reference key="2">
    <citation type="journal article" date="2017" name="Plant J.">
        <title>Araport11: a complete reannotation of the Arabidopsis thaliana reference genome.</title>
        <authorList>
            <person name="Cheng C.Y."/>
            <person name="Krishnakumar V."/>
            <person name="Chan A.P."/>
            <person name="Thibaud-Nissen F."/>
            <person name="Schobel S."/>
            <person name="Town C.D."/>
        </authorList>
    </citation>
    <scope>GENOME REANNOTATION</scope>
    <source>
        <strain>cv. Columbia</strain>
    </source>
</reference>
<reference key="3">
    <citation type="journal article" date="2001" name="Plant Cell">
        <title>Role of SH3 domain-containing proteins in clathrin-mediated vesicle trafficking in Arabidopsis.</title>
        <authorList>
            <person name="Lam B.C.-H."/>
            <person name="Sage T.L."/>
            <person name="Bianchi F."/>
            <person name="Blumwald E."/>
        </authorList>
    </citation>
    <scope>INTERACTION WITH SH3P1</scope>
</reference>
<reference key="4">
    <citation type="journal article" date="2003" name="Plant Physiol.">
        <title>Whole-genome comparison of leucine-rich repeat extensins in Arabidopsis and rice. A conserved family of cell wall proteins form a vegetative and a reproductive clade.</title>
        <authorList>
            <person name="Baumberger N."/>
            <person name="Doesseger B."/>
            <person name="Guyot R."/>
            <person name="Diet A."/>
            <person name="Parsons R.L."/>
            <person name="Clark M.A."/>
            <person name="Simmons M.P."/>
            <person name="Bedinger P."/>
            <person name="Goff S.A."/>
            <person name="Ringli C."/>
            <person name="Keller B."/>
        </authorList>
    </citation>
    <scope>TISSUE SPECIFICITY</scope>
    <scope>GENE FAMILY</scope>
    <scope>NOMENCLATURE</scope>
</reference>
<comment type="function">
    <text evidence="1">Modulates cell morphogenesis by regulating cell wall formation and assembly, and/or growth polarization.</text>
</comment>
<comment type="subunit">
    <text evidence="5">Interacts with SH3P1.</text>
</comment>
<comment type="subcellular location">
    <subcellularLocation>
        <location evidence="2">Secreted</location>
        <location evidence="2">Cell wall</location>
    </subcellularLocation>
</comment>
<comment type="tissue specificity">
    <text evidence="6">Expressed in roots, stems, leaves and flowers, mostly in vascular tissues.</text>
</comment>
<comment type="PTM">
    <text evidence="1">Hydroxylated on proline residues in the S-P-P-P-P repeat.</text>
</comment>
<comment type="PTM">
    <text evidence="1">O-glycosylated on hydroxyprolines.</text>
</comment>
<feature type="signal peptide" evidence="3">
    <location>
        <begin position="1"/>
        <end position="20"/>
    </location>
</feature>
<feature type="chain" id="PRO_0000395463" description="Leucine-rich repeat extensin-like protein 3">
    <location>
        <begin position="21"/>
        <end position="760"/>
    </location>
</feature>
<feature type="repeat" description="LRR 1">
    <location>
        <begin position="21"/>
        <end position="45"/>
    </location>
</feature>
<feature type="repeat" description="LRR 2">
    <location>
        <begin position="113"/>
        <end position="137"/>
    </location>
</feature>
<feature type="repeat" description="LRR 3">
    <location>
        <begin position="138"/>
        <end position="160"/>
    </location>
</feature>
<feature type="repeat" description="LRR 4">
    <location>
        <begin position="161"/>
        <end position="185"/>
    </location>
</feature>
<feature type="repeat" description="LRR 5">
    <location>
        <begin position="186"/>
        <end position="209"/>
    </location>
</feature>
<feature type="repeat" description="LRR 6">
    <location>
        <begin position="211"/>
        <end position="232"/>
    </location>
</feature>
<feature type="repeat" description="LRR 7">
    <location>
        <begin position="234"/>
        <end position="255"/>
    </location>
</feature>
<feature type="repeat" description="LRR 8">
    <location>
        <begin position="256"/>
        <end position="279"/>
    </location>
</feature>
<feature type="repeat" description="LRR 9">
    <location>
        <begin position="281"/>
        <end position="303"/>
    </location>
</feature>
<feature type="repeat" description="LRR 10">
    <location>
        <begin position="304"/>
        <end position="327"/>
    </location>
</feature>
<feature type="region of interest" description="Disordered" evidence="4">
    <location>
        <begin position="389"/>
        <end position="502"/>
    </location>
</feature>
<feature type="region of interest" description="Contains the Ser-Pro(4) repeats">
    <location>
        <begin position="409"/>
        <end position="758"/>
    </location>
</feature>
<feature type="region of interest" description="Disordered" evidence="4">
    <location>
        <begin position="515"/>
        <end position="610"/>
    </location>
</feature>
<feature type="region of interest" description="Disordered" evidence="4">
    <location>
        <begin position="663"/>
        <end position="748"/>
    </location>
</feature>
<feature type="compositionally biased region" description="Pro residues" evidence="4">
    <location>
        <begin position="394"/>
        <end position="415"/>
    </location>
</feature>
<feature type="compositionally biased region" description="Pro residues" evidence="4">
    <location>
        <begin position="423"/>
        <end position="502"/>
    </location>
</feature>
<feature type="compositionally biased region" description="Pro residues" evidence="4">
    <location>
        <begin position="663"/>
        <end position="745"/>
    </location>
</feature>
<feature type="glycosylation site" description="N-linked (GlcNAc...) asparagine" evidence="3">
    <location>
        <position position="16"/>
    </location>
</feature>
<feature type="glycosylation site" description="N-linked (GlcNAc...) asparagine" evidence="3">
    <location>
        <position position="86"/>
    </location>
</feature>
<feature type="glycosylation site" description="N-linked (GlcNAc...) asparagine" evidence="3">
    <location>
        <position position="98"/>
    </location>
</feature>
<feature type="glycosylation site" description="N-linked (GlcNAc...) asparagine" evidence="3">
    <location>
        <position position="281"/>
    </location>
</feature>
<feature type="glycosylation site" description="N-linked (GlcNAc...) asparagine" evidence="3">
    <location>
        <position position="332"/>
    </location>
</feature>